<organism>
    <name type="scientific">Mycobacterium sp. (strain MCS)</name>
    <dbReference type="NCBI Taxonomy" id="164756"/>
    <lineage>
        <taxon>Bacteria</taxon>
        <taxon>Bacillati</taxon>
        <taxon>Actinomycetota</taxon>
        <taxon>Actinomycetes</taxon>
        <taxon>Mycobacteriales</taxon>
        <taxon>Mycobacteriaceae</taxon>
        <taxon>Mycobacterium</taxon>
    </lineage>
</organism>
<reference key="1">
    <citation type="submission" date="2006-06" db="EMBL/GenBank/DDBJ databases">
        <title>Complete sequence of chromosome of Mycobacterium sp. MCS.</title>
        <authorList>
            <consortium name="US DOE Joint Genome Institute"/>
            <person name="Copeland A."/>
            <person name="Lucas S."/>
            <person name="Lapidus A."/>
            <person name="Barry K."/>
            <person name="Detter J.C."/>
            <person name="Glavina del Rio T."/>
            <person name="Hammon N."/>
            <person name="Israni S."/>
            <person name="Dalin E."/>
            <person name="Tice H."/>
            <person name="Pitluck S."/>
            <person name="Martinez M."/>
            <person name="Schmutz J."/>
            <person name="Larimer F."/>
            <person name="Land M."/>
            <person name="Hauser L."/>
            <person name="Kyrpides N."/>
            <person name="Kim E."/>
            <person name="Miller C.D."/>
            <person name="Hughes J.E."/>
            <person name="Anderson A.J."/>
            <person name="Sims R.C."/>
            <person name="Richardson P."/>
        </authorList>
    </citation>
    <scope>NUCLEOTIDE SEQUENCE [LARGE SCALE GENOMIC DNA]</scope>
    <source>
        <strain>MCS</strain>
    </source>
</reference>
<dbReference type="EC" id="1.3.99.-"/>
<dbReference type="EMBL" id="CP000384">
    <property type="protein sequence ID" value="ABG07831.1"/>
    <property type="molecule type" value="Genomic_DNA"/>
</dbReference>
<dbReference type="SMR" id="Q1BBA3"/>
<dbReference type="KEGG" id="mmc:Mmcs_1722"/>
<dbReference type="HOGENOM" id="CLU_709451_0_0_11"/>
<dbReference type="BioCyc" id="MSP164756:G1G6O-1763-MONOMER"/>
<dbReference type="UniPathway" id="UPA00011"/>
<dbReference type="GO" id="GO:0005737">
    <property type="term" value="C:cytoplasm"/>
    <property type="evidence" value="ECO:0007669"/>
    <property type="project" value="TreeGrafter"/>
</dbReference>
<dbReference type="GO" id="GO:0003995">
    <property type="term" value="F:acyl-CoA dehydrogenase activity"/>
    <property type="evidence" value="ECO:0007669"/>
    <property type="project" value="TreeGrafter"/>
</dbReference>
<dbReference type="GO" id="GO:0050660">
    <property type="term" value="F:flavin adenine dinucleotide binding"/>
    <property type="evidence" value="ECO:0007669"/>
    <property type="project" value="InterPro"/>
</dbReference>
<dbReference type="GO" id="GO:0033539">
    <property type="term" value="P:fatty acid beta-oxidation using acyl-CoA dehydrogenase"/>
    <property type="evidence" value="ECO:0007669"/>
    <property type="project" value="TreeGrafter"/>
</dbReference>
<dbReference type="CDD" id="cd00567">
    <property type="entry name" value="ACAD"/>
    <property type="match status" value="1"/>
</dbReference>
<dbReference type="Gene3D" id="1.10.540.10">
    <property type="entry name" value="Acyl-CoA dehydrogenase/oxidase, N-terminal domain"/>
    <property type="match status" value="1"/>
</dbReference>
<dbReference type="Gene3D" id="2.40.110.10">
    <property type="entry name" value="Butyryl-CoA Dehydrogenase, subunit A, domain 2"/>
    <property type="match status" value="1"/>
</dbReference>
<dbReference type="Gene3D" id="1.20.140.10">
    <property type="entry name" value="Butyryl-CoA Dehydrogenase, subunit A, domain 3"/>
    <property type="match status" value="1"/>
</dbReference>
<dbReference type="InterPro" id="IPR050741">
    <property type="entry name" value="Acyl-CoA_dehydrogenase"/>
</dbReference>
<dbReference type="InterPro" id="IPR006091">
    <property type="entry name" value="Acyl-CoA_Oxase/DH_mid-dom"/>
</dbReference>
<dbReference type="InterPro" id="IPR046373">
    <property type="entry name" value="Acyl-CoA_Oxase/DH_mid-dom_sf"/>
</dbReference>
<dbReference type="InterPro" id="IPR036250">
    <property type="entry name" value="AcylCo_DH-like_C"/>
</dbReference>
<dbReference type="InterPro" id="IPR009075">
    <property type="entry name" value="AcylCo_DH/oxidase_C"/>
</dbReference>
<dbReference type="InterPro" id="IPR013786">
    <property type="entry name" value="AcylCoA_DH/ox_N"/>
</dbReference>
<dbReference type="InterPro" id="IPR037069">
    <property type="entry name" value="AcylCoA_DH/ox_N_sf"/>
</dbReference>
<dbReference type="InterPro" id="IPR009100">
    <property type="entry name" value="AcylCoA_DH/oxidase_NM_dom_sf"/>
</dbReference>
<dbReference type="NCBIfam" id="NF037942">
    <property type="entry name" value="ac_ACP_DH_MbtN"/>
    <property type="match status" value="1"/>
</dbReference>
<dbReference type="PANTHER" id="PTHR48083:SF20">
    <property type="entry name" value="LONG-CHAIN SPECIFIC ACYL-COA DEHYDROGENASE, MITOCHONDRIAL"/>
    <property type="match status" value="1"/>
</dbReference>
<dbReference type="PANTHER" id="PTHR48083">
    <property type="entry name" value="MEDIUM-CHAIN SPECIFIC ACYL-COA DEHYDROGENASE, MITOCHONDRIAL-RELATED"/>
    <property type="match status" value="1"/>
</dbReference>
<dbReference type="Pfam" id="PF00441">
    <property type="entry name" value="Acyl-CoA_dh_1"/>
    <property type="match status" value="1"/>
</dbReference>
<dbReference type="Pfam" id="PF02770">
    <property type="entry name" value="Acyl-CoA_dh_M"/>
    <property type="match status" value="1"/>
</dbReference>
<dbReference type="Pfam" id="PF02771">
    <property type="entry name" value="Acyl-CoA_dh_N"/>
    <property type="match status" value="1"/>
</dbReference>
<dbReference type="SUPFAM" id="SSF47203">
    <property type="entry name" value="Acyl-CoA dehydrogenase C-terminal domain-like"/>
    <property type="match status" value="1"/>
</dbReference>
<dbReference type="SUPFAM" id="SSF56645">
    <property type="entry name" value="Acyl-CoA dehydrogenase NM domain-like"/>
    <property type="match status" value="1"/>
</dbReference>
<evidence type="ECO:0000250" key="1"/>
<evidence type="ECO:0000305" key="2"/>
<protein>
    <recommendedName>
        <fullName>Acyl-[acyl-carrier-protein] dehydrogenase MbtN</fullName>
        <shortName>Acyl-ACP dehydrogenase MbtN</shortName>
        <ecNumber>1.3.99.-</ecNumber>
    </recommendedName>
    <alternativeName>
        <fullName>Mycobactin synthase protein N</fullName>
    </alternativeName>
</protein>
<proteinExistence type="inferred from homology"/>
<comment type="function">
    <text evidence="1">Catalyzes the dehydrogenation at the alpha-beta position of ACP-bound acyl chains. This results in the introduction of a double bond in the lipidic chain, which is further transferred to the epsilon-amino group of lysine residue in the mycobactin core by MbtK (By similarity).</text>
</comment>
<comment type="cofactor">
    <cofactor evidence="1">
        <name>FAD</name>
        <dbReference type="ChEBI" id="CHEBI:57692"/>
    </cofactor>
</comment>
<comment type="pathway">
    <text>Siderophore biosynthesis; mycobactin biosynthesis.</text>
</comment>
<comment type="similarity">
    <text evidence="2">Belongs to the acyl-CoA dehydrogenase family.</text>
</comment>
<keyword id="KW-0274">FAD</keyword>
<keyword id="KW-0285">Flavoprotein</keyword>
<keyword id="KW-0560">Oxidoreductase</keyword>
<sequence length="389" mass="42009">MTLAAHTTEDYEELLGRVFDDQVKAWTAEAEASERFPRQLIEHLGRTGVFTQKWGDGQQPDVAKLIALALELGRLGSAGIGVGVSLHDSAIALLRRFAKNDYLRTICEQAIRGEAVLCIGASEISGGSDLQIVGTEVRSVRDGYEVRGVKKFVSLSPIADHIMVVARNVDHDPGSRHGNVVVIAVPTSQVEAQAPYRKVGAGPLDTAAVHIDTWVPGDALIARPGTGLAAISWGLAHERLSIAGQVAGASQRVIGITLARMMKRRQFGHTLYEHQALRMRMADLQARVDMLRYALAGIAAGGRLDLRAAAAIKVTAARLGEEVLSECMHIFGGSGYLTDETPLGRWWRDMKLARVGGGTDEVLWELVAAAMRPDYDGYDELIDSPTGDD</sequence>
<feature type="chain" id="PRO_0000278307" description="Acyl-[acyl-carrier-protein] dehydrogenase MbtN">
    <location>
        <begin position="1"/>
        <end position="389"/>
    </location>
</feature>
<name>MBTN_MYCSS</name>
<gene>
    <name type="primary">mbtN</name>
    <name type="synonym">fadE14</name>
    <name type="ordered locus">Mmcs_1722</name>
</gene>
<accession>Q1BBA3</accession>